<comment type="function">
    <text evidence="1">Might take part in the signal recognition particle (SRP) pathway. This is inferred from the conservation of its genetic proximity to ftsY/ffh. May be a regulatory protein (By similarity).</text>
</comment>
<comment type="similarity">
    <text evidence="2">Belongs to the UPF0122 family.</text>
</comment>
<evidence type="ECO:0000250" key="1"/>
<evidence type="ECO:0000305" key="2"/>
<reference key="1">
    <citation type="journal article" date="2002" name="Proc. Natl. Acad. Sci. U.S.A.">
        <title>Complete genome sequence of Clostridium perfringens, an anaerobic flesh-eater.</title>
        <authorList>
            <person name="Shimizu T."/>
            <person name="Ohtani K."/>
            <person name="Hirakawa H."/>
            <person name="Ohshima K."/>
            <person name="Yamashita A."/>
            <person name="Shiba T."/>
            <person name="Ogasawara N."/>
            <person name="Hattori M."/>
            <person name="Kuhara S."/>
            <person name="Hayashi H."/>
        </authorList>
    </citation>
    <scope>NUCLEOTIDE SEQUENCE [LARGE SCALE GENOMIC DNA]</scope>
    <source>
        <strain>13 / Type A</strain>
    </source>
</reference>
<keyword id="KW-1185">Reference proteome</keyword>
<protein>
    <recommendedName>
        <fullName>UPF0122 protein CPE1714</fullName>
    </recommendedName>
</protein>
<accession>Q8XJP2</accession>
<organism>
    <name type="scientific">Clostridium perfringens (strain 13 / Type A)</name>
    <dbReference type="NCBI Taxonomy" id="195102"/>
    <lineage>
        <taxon>Bacteria</taxon>
        <taxon>Bacillati</taxon>
        <taxon>Bacillota</taxon>
        <taxon>Clostridia</taxon>
        <taxon>Eubacteriales</taxon>
        <taxon>Clostridiaceae</taxon>
        <taxon>Clostridium</taxon>
    </lineage>
</organism>
<feature type="chain" id="PRO_0000211863" description="UPF0122 protein CPE1714">
    <location>
        <begin position="1"/>
        <end position="112"/>
    </location>
</feature>
<name>Y1714_CLOPE</name>
<gene>
    <name type="ordered locus">CPE1714</name>
</gene>
<sequence length="112" mass="13436">MENRFEISMLIDYYGTLLTEKQFNVMTLYYNEDLSLAEIAEINKTSRQAIYDLIKRCSKQLHSYDEKLKLSKKVDKRYRIKEELMAELNKNSNLDENIKKYIDEKLEEIINA</sequence>
<proteinExistence type="inferred from homology"/>
<dbReference type="EMBL" id="BA000016">
    <property type="protein sequence ID" value="BAB81420.1"/>
    <property type="molecule type" value="Genomic_DNA"/>
</dbReference>
<dbReference type="RefSeq" id="WP_011010575.1">
    <property type="nucleotide sequence ID" value="NC_003366.1"/>
</dbReference>
<dbReference type="SMR" id="Q8XJP2"/>
<dbReference type="STRING" id="195102.gene:10490978"/>
<dbReference type="KEGG" id="cpe:CPE1714"/>
<dbReference type="HOGENOM" id="CLU_129218_1_0_9"/>
<dbReference type="Proteomes" id="UP000000818">
    <property type="component" value="Chromosome"/>
</dbReference>
<dbReference type="Gene3D" id="1.10.10.10">
    <property type="entry name" value="Winged helix-like DNA-binding domain superfamily/Winged helix DNA-binding domain"/>
    <property type="match status" value="1"/>
</dbReference>
<dbReference type="HAMAP" id="MF_00245">
    <property type="entry name" value="UPF0122"/>
    <property type="match status" value="1"/>
</dbReference>
<dbReference type="InterPro" id="IPR013324">
    <property type="entry name" value="RNA_pol_sigma_r3/r4-like"/>
</dbReference>
<dbReference type="InterPro" id="IPR007394">
    <property type="entry name" value="UPF0122"/>
</dbReference>
<dbReference type="InterPro" id="IPR054831">
    <property type="entry name" value="UPF0122_fam_protein"/>
</dbReference>
<dbReference type="InterPro" id="IPR036388">
    <property type="entry name" value="WH-like_DNA-bd_sf"/>
</dbReference>
<dbReference type="NCBIfam" id="NF001072">
    <property type="entry name" value="PRK00118.2-2"/>
    <property type="match status" value="1"/>
</dbReference>
<dbReference type="NCBIfam" id="NF045758">
    <property type="entry name" value="YlxM"/>
    <property type="match status" value="1"/>
</dbReference>
<dbReference type="PANTHER" id="PTHR40083">
    <property type="entry name" value="UPF0122 PROTEIN CBO2450/CLC_2298"/>
    <property type="match status" value="1"/>
</dbReference>
<dbReference type="PANTHER" id="PTHR40083:SF1">
    <property type="entry name" value="UPF0122 PROTEIN YLXM"/>
    <property type="match status" value="1"/>
</dbReference>
<dbReference type="Pfam" id="PF04297">
    <property type="entry name" value="UPF0122"/>
    <property type="match status" value="1"/>
</dbReference>
<dbReference type="SUPFAM" id="SSF88659">
    <property type="entry name" value="Sigma3 and sigma4 domains of RNA polymerase sigma factors"/>
    <property type="match status" value="1"/>
</dbReference>